<accession>Q8VE88</accession>
<accession>Q3UE42</accession>
<accession>Q5QNR1</accession>
<accession>Q9D310</accession>
<sequence>MSDKDPPESPVVTGVASTLKDENCEPVEKPEDKSQPVVSTRKRPETKPSSDLEASALPAQVSLAVAKETASKDVPQTGWGYWGSWGKSLLSSASATVATVGQGISNVIEKAETSLGIPSPTEISAEVKQAAGEKNAGENGSLLVAAPFGMLSTISTAVQSTGKSVISGGLDALEFIGKKTMDVIAEGDPGFKRTKGLMNRTSTLSQVLREAKDKEEQRPSNEVTMETDKKTHYGLLFDEFQGLSHLEALEMLSRESEIKVKSILSSLSGEELQTTRLELEQLKEVFSLAEFCEEEEEERQGDDNFTKEITDLFAQLHVSSRPEKLARARNTAYKWIRTSLARPVAEKEEGEKESEAGNTEEAQKHSIEDIHAFAIRSLAELTACSIELFHKTAALVLHGQKQEVTALERSQTLSQMTVMLCKDLASLSKEFTTCLTTAGVREKADVLNPVITAVFLEASNSASYIQDAFQLLLPVLQISLIESKTESSTCEPQSRDL</sequence>
<dbReference type="EMBL" id="AK018570">
    <property type="protein sequence ID" value="BAB31282.1"/>
    <property type="molecule type" value="mRNA"/>
</dbReference>
<dbReference type="EMBL" id="AK149763">
    <property type="protein sequence ID" value="BAE29069.1"/>
    <property type="molecule type" value="mRNA"/>
</dbReference>
<dbReference type="EMBL" id="AL672236">
    <property type="status" value="NOT_ANNOTATED_CDS"/>
    <property type="molecule type" value="Genomic_DNA"/>
</dbReference>
<dbReference type="EMBL" id="BC019518">
    <property type="protein sequence ID" value="AAH19518.1"/>
    <property type="molecule type" value="mRNA"/>
</dbReference>
<dbReference type="CCDS" id="CCDS24717.1">
    <molecule id="Q8VE88-2"/>
</dbReference>
<dbReference type="CCDS" id="CCDS48801.1">
    <molecule id="Q8VE88-1"/>
</dbReference>
<dbReference type="RefSeq" id="NP_001162138.1">
    <molecule id="Q8VE88-2"/>
    <property type="nucleotide sequence ID" value="NM_001168667.1"/>
</dbReference>
<dbReference type="RefSeq" id="NP_001162139.1">
    <molecule id="Q8VE88-1"/>
    <property type="nucleotide sequence ID" value="NM_001168668.1"/>
</dbReference>
<dbReference type="RefSeq" id="NP_080618.1">
    <molecule id="Q8VE88-2"/>
    <property type="nucleotide sequence ID" value="NM_026342.3"/>
</dbReference>
<dbReference type="RefSeq" id="XP_006534079.1">
    <molecule id="Q8VE88-1"/>
    <property type="nucleotide sequence ID" value="XM_006534016.3"/>
</dbReference>
<dbReference type="RefSeq" id="XP_011247496.1">
    <molecule id="Q8VE88-1"/>
    <property type="nucleotide sequence ID" value="XM_011249194.4"/>
</dbReference>
<dbReference type="RefSeq" id="XP_011247497.1">
    <molecule id="Q8VE88-2"/>
    <property type="nucleotide sequence ID" value="XM_011249195.4"/>
</dbReference>
<dbReference type="BioGRID" id="212397">
    <property type="interactions" value="1"/>
</dbReference>
<dbReference type="FunCoup" id="Q8VE88">
    <property type="interactions" value="472"/>
</dbReference>
<dbReference type="STRING" id="10090.ENSMUSP00000104478"/>
<dbReference type="GlyGen" id="Q8VE88">
    <property type="glycosylation" value="4 sites, 3 N-linked glycans (3 sites), 1 O-linked glycan (1 site)"/>
</dbReference>
<dbReference type="iPTMnet" id="Q8VE88"/>
<dbReference type="PhosphoSitePlus" id="Q8VE88"/>
<dbReference type="SwissPalm" id="Q8VE88"/>
<dbReference type="jPOST" id="Q8VE88"/>
<dbReference type="PaxDb" id="10090-ENSMUSP00000104478"/>
<dbReference type="PeptideAtlas" id="Q8VE88"/>
<dbReference type="ProteomicsDB" id="275814">
    <molecule id="Q8VE88-1"/>
</dbReference>
<dbReference type="ProteomicsDB" id="275815">
    <molecule id="Q8VE88-2"/>
</dbReference>
<dbReference type="Pumba" id="Q8VE88"/>
<dbReference type="Antibodypedia" id="48470">
    <property type="antibodies" value="65 antibodies from 15 providers"/>
</dbReference>
<dbReference type="DNASU" id="67726"/>
<dbReference type="Ensembl" id="ENSMUST00000020831.13">
    <molecule id="Q8VE88-2"/>
    <property type="protein sequence ID" value="ENSMUSP00000020831.7"/>
    <property type="gene ID" value="ENSMUSG00000020523.15"/>
</dbReference>
<dbReference type="Ensembl" id="ENSMUST00000108850.2">
    <molecule id="Q8VE88-1"/>
    <property type="protein sequence ID" value="ENSMUSP00000104478.2"/>
    <property type="gene ID" value="ENSMUSG00000020523.15"/>
</dbReference>
<dbReference type="GeneID" id="67726"/>
<dbReference type="KEGG" id="mmu:67726"/>
<dbReference type="UCSC" id="uc007izt.2">
    <molecule id="Q8VE88-1"/>
    <property type="organism name" value="mouse"/>
</dbReference>
<dbReference type="UCSC" id="uc007izu.2">
    <molecule id="Q8VE88-2"/>
    <property type="organism name" value="mouse"/>
</dbReference>
<dbReference type="AGR" id="MGI:1917629"/>
<dbReference type="CTD" id="10827"/>
<dbReference type="MGI" id="MGI:1917629">
    <property type="gene designation" value="Fam114a2"/>
</dbReference>
<dbReference type="VEuPathDB" id="HostDB:ENSMUSG00000020523"/>
<dbReference type="eggNOG" id="ENOG502QS74">
    <property type="taxonomic scope" value="Eukaryota"/>
</dbReference>
<dbReference type="GeneTree" id="ENSGT00390000010054"/>
<dbReference type="HOGENOM" id="CLU_035724_1_0_1"/>
<dbReference type="InParanoid" id="Q8VE88"/>
<dbReference type="OMA" id="NTFFAEM"/>
<dbReference type="OrthoDB" id="5597648at2759"/>
<dbReference type="PhylomeDB" id="Q8VE88"/>
<dbReference type="TreeFam" id="TF324360"/>
<dbReference type="BioGRID-ORCS" id="67726">
    <property type="hits" value="5 hits in 79 CRISPR screens"/>
</dbReference>
<dbReference type="PRO" id="PR:Q8VE88"/>
<dbReference type="Proteomes" id="UP000000589">
    <property type="component" value="Chromosome 11"/>
</dbReference>
<dbReference type="RNAct" id="Q8VE88">
    <property type="molecule type" value="protein"/>
</dbReference>
<dbReference type="Bgee" id="ENSMUSG00000020523">
    <property type="expression patterns" value="Expressed in seminal vesicle and 279 other cell types or tissues"/>
</dbReference>
<dbReference type="InterPro" id="IPR007998">
    <property type="entry name" value="DUF719"/>
</dbReference>
<dbReference type="PANTHER" id="PTHR12842">
    <property type="entry name" value="FI01459P"/>
    <property type="match status" value="1"/>
</dbReference>
<dbReference type="PANTHER" id="PTHR12842:SF3">
    <property type="entry name" value="PROTEIN FAM114A2"/>
    <property type="match status" value="1"/>
</dbReference>
<dbReference type="Pfam" id="PF05334">
    <property type="entry name" value="DUF719"/>
    <property type="match status" value="1"/>
</dbReference>
<proteinExistence type="evidence at protein level"/>
<name>F1142_MOUSE</name>
<organism>
    <name type="scientific">Mus musculus</name>
    <name type="common">Mouse</name>
    <dbReference type="NCBI Taxonomy" id="10090"/>
    <lineage>
        <taxon>Eukaryota</taxon>
        <taxon>Metazoa</taxon>
        <taxon>Chordata</taxon>
        <taxon>Craniata</taxon>
        <taxon>Vertebrata</taxon>
        <taxon>Euteleostomi</taxon>
        <taxon>Mammalia</taxon>
        <taxon>Eutheria</taxon>
        <taxon>Euarchontoglires</taxon>
        <taxon>Glires</taxon>
        <taxon>Rodentia</taxon>
        <taxon>Myomorpha</taxon>
        <taxon>Muroidea</taxon>
        <taxon>Muridae</taxon>
        <taxon>Murinae</taxon>
        <taxon>Mus</taxon>
        <taxon>Mus</taxon>
    </lineage>
</organism>
<keyword id="KW-0025">Alternative splicing</keyword>
<keyword id="KW-0597">Phosphoprotein</keyword>
<keyword id="KW-1185">Reference proteome</keyword>
<protein>
    <recommendedName>
        <fullName>Protein FAM114A2</fullName>
    </recommendedName>
</protein>
<feature type="chain" id="PRO_0000274565" description="Protein FAM114A2">
    <location>
        <begin position="1"/>
        <end position="497"/>
    </location>
</feature>
<feature type="region of interest" description="Disordered" evidence="2">
    <location>
        <begin position="1"/>
        <end position="54"/>
    </location>
</feature>
<feature type="region of interest" description="Disordered" evidence="2">
    <location>
        <begin position="344"/>
        <end position="364"/>
    </location>
</feature>
<feature type="compositionally biased region" description="Basic and acidic residues" evidence="2">
    <location>
        <begin position="19"/>
        <end position="34"/>
    </location>
</feature>
<feature type="modified residue" description="Phosphoserine" evidence="1">
    <location>
        <position position="84"/>
    </location>
</feature>
<feature type="modified residue" description="Phosphoserine" evidence="1">
    <location>
        <position position="205"/>
    </location>
</feature>
<feature type="splice variant" id="VSP_022796" description="In isoform 2." evidence="3">
    <location>
        <begin position="61"/>
        <end position="67"/>
    </location>
</feature>
<feature type="sequence conflict" description="In Ref. 3; AAH19518." evidence="4" ref="3">
    <original>G</original>
    <variation>E</variation>
    <location>
        <position position="14"/>
    </location>
</feature>
<feature type="sequence conflict" description="In Ref. 3; AAH19518." evidence="4" ref="3">
    <original>N</original>
    <variation>D</variation>
    <location>
        <position position="304"/>
    </location>
</feature>
<feature type="sequence conflict" description="In Ref. 3; AAH19518." evidence="4" ref="3">
    <original>V</original>
    <variation>I</variation>
    <location>
        <position position="318"/>
    </location>
</feature>
<feature type="sequence conflict" description="In Ref. 3; AAH19518." evidence="4" ref="3">
    <original>A</original>
    <variation>V</variation>
    <location>
        <position position="438"/>
    </location>
</feature>
<feature type="sequence conflict" description="In Ref. 1; BAE29069." evidence="4" ref="1">
    <original>S</original>
    <variation>P</variation>
    <location>
        <position position="488"/>
    </location>
</feature>
<feature type="sequence conflict" description="In Ref. 3; AAH19518." evidence="4" ref="3">
    <original>S</original>
    <variation>P</variation>
    <location>
        <position position="494"/>
    </location>
</feature>
<comment type="alternative products">
    <event type="alternative splicing"/>
    <isoform>
        <id>Q8VE88-1</id>
        <name>1</name>
        <sequence type="displayed"/>
    </isoform>
    <isoform>
        <id>Q8VE88-2</id>
        <name>2</name>
        <sequence type="described" ref="VSP_022796"/>
    </isoform>
</comment>
<comment type="similarity">
    <text evidence="4">Belongs to the FAM114 family.</text>
</comment>
<gene>
    <name type="primary">Fam114a2</name>
</gene>
<reference key="1">
    <citation type="journal article" date="2005" name="Science">
        <title>The transcriptional landscape of the mammalian genome.</title>
        <authorList>
            <person name="Carninci P."/>
            <person name="Kasukawa T."/>
            <person name="Katayama S."/>
            <person name="Gough J."/>
            <person name="Frith M.C."/>
            <person name="Maeda N."/>
            <person name="Oyama R."/>
            <person name="Ravasi T."/>
            <person name="Lenhard B."/>
            <person name="Wells C."/>
            <person name="Kodzius R."/>
            <person name="Shimokawa K."/>
            <person name="Bajic V.B."/>
            <person name="Brenner S.E."/>
            <person name="Batalov S."/>
            <person name="Forrest A.R."/>
            <person name="Zavolan M."/>
            <person name="Davis M.J."/>
            <person name="Wilming L.G."/>
            <person name="Aidinis V."/>
            <person name="Allen J.E."/>
            <person name="Ambesi-Impiombato A."/>
            <person name="Apweiler R."/>
            <person name="Aturaliya R.N."/>
            <person name="Bailey T.L."/>
            <person name="Bansal M."/>
            <person name="Baxter L."/>
            <person name="Beisel K.W."/>
            <person name="Bersano T."/>
            <person name="Bono H."/>
            <person name="Chalk A.M."/>
            <person name="Chiu K.P."/>
            <person name="Choudhary V."/>
            <person name="Christoffels A."/>
            <person name="Clutterbuck D.R."/>
            <person name="Crowe M.L."/>
            <person name="Dalla E."/>
            <person name="Dalrymple B.P."/>
            <person name="de Bono B."/>
            <person name="Della Gatta G."/>
            <person name="di Bernardo D."/>
            <person name="Down T."/>
            <person name="Engstrom P."/>
            <person name="Fagiolini M."/>
            <person name="Faulkner G."/>
            <person name="Fletcher C.F."/>
            <person name="Fukushima T."/>
            <person name="Furuno M."/>
            <person name="Futaki S."/>
            <person name="Gariboldi M."/>
            <person name="Georgii-Hemming P."/>
            <person name="Gingeras T.R."/>
            <person name="Gojobori T."/>
            <person name="Green R.E."/>
            <person name="Gustincich S."/>
            <person name="Harbers M."/>
            <person name="Hayashi Y."/>
            <person name="Hensch T.K."/>
            <person name="Hirokawa N."/>
            <person name="Hill D."/>
            <person name="Huminiecki L."/>
            <person name="Iacono M."/>
            <person name="Ikeo K."/>
            <person name="Iwama A."/>
            <person name="Ishikawa T."/>
            <person name="Jakt M."/>
            <person name="Kanapin A."/>
            <person name="Katoh M."/>
            <person name="Kawasawa Y."/>
            <person name="Kelso J."/>
            <person name="Kitamura H."/>
            <person name="Kitano H."/>
            <person name="Kollias G."/>
            <person name="Krishnan S.P."/>
            <person name="Kruger A."/>
            <person name="Kummerfeld S.K."/>
            <person name="Kurochkin I.V."/>
            <person name="Lareau L.F."/>
            <person name="Lazarevic D."/>
            <person name="Lipovich L."/>
            <person name="Liu J."/>
            <person name="Liuni S."/>
            <person name="McWilliam S."/>
            <person name="Madan Babu M."/>
            <person name="Madera M."/>
            <person name="Marchionni L."/>
            <person name="Matsuda H."/>
            <person name="Matsuzawa S."/>
            <person name="Miki H."/>
            <person name="Mignone F."/>
            <person name="Miyake S."/>
            <person name="Morris K."/>
            <person name="Mottagui-Tabar S."/>
            <person name="Mulder N."/>
            <person name="Nakano N."/>
            <person name="Nakauchi H."/>
            <person name="Ng P."/>
            <person name="Nilsson R."/>
            <person name="Nishiguchi S."/>
            <person name="Nishikawa S."/>
            <person name="Nori F."/>
            <person name="Ohara O."/>
            <person name="Okazaki Y."/>
            <person name="Orlando V."/>
            <person name="Pang K.C."/>
            <person name="Pavan W.J."/>
            <person name="Pavesi G."/>
            <person name="Pesole G."/>
            <person name="Petrovsky N."/>
            <person name="Piazza S."/>
            <person name="Reed J."/>
            <person name="Reid J.F."/>
            <person name="Ring B.Z."/>
            <person name="Ringwald M."/>
            <person name="Rost B."/>
            <person name="Ruan Y."/>
            <person name="Salzberg S.L."/>
            <person name="Sandelin A."/>
            <person name="Schneider C."/>
            <person name="Schoenbach C."/>
            <person name="Sekiguchi K."/>
            <person name="Semple C.A."/>
            <person name="Seno S."/>
            <person name="Sessa L."/>
            <person name="Sheng Y."/>
            <person name="Shibata Y."/>
            <person name="Shimada H."/>
            <person name="Shimada K."/>
            <person name="Silva D."/>
            <person name="Sinclair B."/>
            <person name="Sperling S."/>
            <person name="Stupka E."/>
            <person name="Sugiura K."/>
            <person name="Sultana R."/>
            <person name="Takenaka Y."/>
            <person name="Taki K."/>
            <person name="Tammoja K."/>
            <person name="Tan S.L."/>
            <person name="Tang S."/>
            <person name="Taylor M.S."/>
            <person name="Tegner J."/>
            <person name="Teichmann S.A."/>
            <person name="Ueda H.R."/>
            <person name="van Nimwegen E."/>
            <person name="Verardo R."/>
            <person name="Wei C.L."/>
            <person name="Yagi K."/>
            <person name="Yamanishi H."/>
            <person name="Zabarovsky E."/>
            <person name="Zhu S."/>
            <person name="Zimmer A."/>
            <person name="Hide W."/>
            <person name="Bult C."/>
            <person name="Grimmond S.M."/>
            <person name="Teasdale R.D."/>
            <person name="Liu E.T."/>
            <person name="Brusic V."/>
            <person name="Quackenbush J."/>
            <person name="Wahlestedt C."/>
            <person name="Mattick J.S."/>
            <person name="Hume D.A."/>
            <person name="Kai C."/>
            <person name="Sasaki D."/>
            <person name="Tomaru Y."/>
            <person name="Fukuda S."/>
            <person name="Kanamori-Katayama M."/>
            <person name="Suzuki M."/>
            <person name="Aoki J."/>
            <person name="Arakawa T."/>
            <person name="Iida J."/>
            <person name="Imamura K."/>
            <person name="Itoh M."/>
            <person name="Kato T."/>
            <person name="Kawaji H."/>
            <person name="Kawagashira N."/>
            <person name="Kawashima T."/>
            <person name="Kojima M."/>
            <person name="Kondo S."/>
            <person name="Konno H."/>
            <person name="Nakano K."/>
            <person name="Ninomiya N."/>
            <person name="Nishio T."/>
            <person name="Okada M."/>
            <person name="Plessy C."/>
            <person name="Shibata K."/>
            <person name="Shiraki T."/>
            <person name="Suzuki S."/>
            <person name="Tagami M."/>
            <person name="Waki K."/>
            <person name="Watahiki A."/>
            <person name="Okamura-Oho Y."/>
            <person name="Suzuki H."/>
            <person name="Kawai J."/>
            <person name="Hayashizaki Y."/>
        </authorList>
    </citation>
    <scope>NUCLEOTIDE SEQUENCE [LARGE SCALE MRNA] (ISOFORM 2)</scope>
    <source>
        <strain>C57BL/6J</strain>
        <tissue>Bone marrow</tissue>
        <tissue>Colon</tissue>
    </source>
</reference>
<reference key="2">
    <citation type="journal article" date="2009" name="PLoS Biol.">
        <title>Lineage-specific biology revealed by a finished genome assembly of the mouse.</title>
        <authorList>
            <person name="Church D.M."/>
            <person name="Goodstadt L."/>
            <person name="Hillier L.W."/>
            <person name="Zody M.C."/>
            <person name="Goldstein S."/>
            <person name="She X."/>
            <person name="Bult C.J."/>
            <person name="Agarwala R."/>
            <person name="Cherry J.L."/>
            <person name="DiCuccio M."/>
            <person name="Hlavina W."/>
            <person name="Kapustin Y."/>
            <person name="Meric P."/>
            <person name="Maglott D."/>
            <person name="Birtle Z."/>
            <person name="Marques A.C."/>
            <person name="Graves T."/>
            <person name="Zhou S."/>
            <person name="Teague B."/>
            <person name="Potamousis K."/>
            <person name="Churas C."/>
            <person name="Place M."/>
            <person name="Herschleb J."/>
            <person name="Runnheim R."/>
            <person name="Forrest D."/>
            <person name="Amos-Landgraf J."/>
            <person name="Schwartz D.C."/>
            <person name="Cheng Z."/>
            <person name="Lindblad-Toh K."/>
            <person name="Eichler E.E."/>
            <person name="Ponting C.P."/>
        </authorList>
    </citation>
    <scope>NUCLEOTIDE SEQUENCE [LARGE SCALE GENOMIC DNA]</scope>
    <source>
        <strain>C57BL/6J</strain>
    </source>
</reference>
<reference key="3">
    <citation type="journal article" date="2004" name="Genome Res.">
        <title>The status, quality, and expansion of the NIH full-length cDNA project: the Mammalian Gene Collection (MGC).</title>
        <authorList>
            <consortium name="The MGC Project Team"/>
        </authorList>
    </citation>
    <scope>NUCLEOTIDE SEQUENCE [LARGE SCALE MRNA] (ISOFORM 1)</scope>
    <source>
        <strain>FVB/N</strain>
        <tissue>Mammary tumor</tissue>
    </source>
</reference>
<reference key="4">
    <citation type="journal article" date="2010" name="Cell">
        <title>A tissue-specific atlas of mouse protein phosphorylation and expression.</title>
        <authorList>
            <person name="Huttlin E.L."/>
            <person name="Jedrychowski M.P."/>
            <person name="Elias J.E."/>
            <person name="Goswami T."/>
            <person name="Rad R."/>
            <person name="Beausoleil S.A."/>
            <person name="Villen J."/>
            <person name="Haas W."/>
            <person name="Sowa M.E."/>
            <person name="Gygi S.P."/>
        </authorList>
    </citation>
    <scope>IDENTIFICATION BY MASS SPECTROMETRY [LARGE SCALE ANALYSIS]</scope>
    <source>
        <tissue>Brain</tissue>
        <tissue>Brown adipose tissue</tissue>
        <tissue>Kidney</tissue>
        <tissue>Lung</tissue>
        <tissue>Pancreas</tissue>
        <tissue>Spleen</tissue>
        <tissue>Testis</tissue>
    </source>
</reference>
<evidence type="ECO:0000250" key="1">
    <source>
        <dbReference type="UniProtKB" id="Q9NRY5"/>
    </source>
</evidence>
<evidence type="ECO:0000256" key="2">
    <source>
        <dbReference type="SAM" id="MobiDB-lite"/>
    </source>
</evidence>
<evidence type="ECO:0000303" key="3">
    <source>
    </source>
</evidence>
<evidence type="ECO:0000305" key="4"/>